<gene>
    <name evidence="1" type="primary">kaiC</name>
    <name type="ordered locus">AM1_0992</name>
</gene>
<dbReference type="EC" id="2.7.11.1" evidence="1"/>
<dbReference type="EC" id="3.6.4.-" evidence="1"/>
<dbReference type="EMBL" id="AB120712">
    <property type="protein sequence ID" value="BAD21217.1"/>
    <property type="molecule type" value="Genomic_DNA"/>
</dbReference>
<dbReference type="EMBL" id="CP000828">
    <property type="protein sequence ID" value="ABW26034.1"/>
    <property type="molecule type" value="Genomic_DNA"/>
</dbReference>
<dbReference type="RefSeq" id="WP_012161596.1">
    <property type="nucleotide sequence ID" value="NC_009925.1"/>
</dbReference>
<dbReference type="SMR" id="Q6L8L1"/>
<dbReference type="STRING" id="329726.AM1_0992"/>
<dbReference type="KEGG" id="amr:AM1_0992"/>
<dbReference type="eggNOG" id="COG0467">
    <property type="taxonomic scope" value="Bacteria"/>
</dbReference>
<dbReference type="HOGENOM" id="CLU_023669_4_1_3"/>
<dbReference type="OrthoDB" id="9787927at2"/>
<dbReference type="Proteomes" id="UP000000268">
    <property type="component" value="Chromosome"/>
</dbReference>
<dbReference type="GO" id="GO:0005524">
    <property type="term" value="F:ATP binding"/>
    <property type="evidence" value="ECO:0007669"/>
    <property type="project" value="UniProtKB-UniRule"/>
</dbReference>
<dbReference type="GO" id="GO:0016887">
    <property type="term" value="F:ATP hydrolysis activity"/>
    <property type="evidence" value="ECO:0007669"/>
    <property type="project" value="RHEA"/>
</dbReference>
<dbReference type="GO" id="GO:0003677">
    <property type="term" value="F:DNA binding"/>
    <property type="evidence" value="ECO:0007669"/>
    <property type="project" value="InterPro"/>
</dbReference>
<dbReference type="GO" id="GO:0000287">
    <property type="term" value="F:magnesium ion binding"/>
    <property type="evidence" value="ECO:0007669"/>
    <property type="project" value="UniProtKB-UniRule"/>
</dbReference>
<dbReference type="GO" id="GO:0106310">
    <property type="term" value="F:protein serine kinase activity"/>
    <property type="evidence" value="ECO:0007669"/>
    <property type="project" value="RHEA"/>
</dbReference>
<dbReference type="GO" id="GO:0004674">
    <property type="term" value="F:protein serine/threonine kinase activity"/>
    <property type="evidence" value="ECO:0007669"/>
    <property type="project" value="UniProtKB-KW"/>
</dbReference>
<dbReference type="GO" id="GO:0004712">
    <property type="term" value="F:protein serine/threonine/tyrosine kinase activity"/>
    <property type="evidence" value="ECO:0007669"/>
    <property type="project" value="UniProtKB-UniRule"/>
</dbReference>
<dbReference type="GO" id="GO:0007623">
    <property type="term" value="P:circadian rhythm"/>
    <property type="evidence" value="ECO:0007669"/>
    <property type="project" value="UniProtKB-UniRule"/>
</dbReference>
<dbReference type="GO" id="GO:0042752">
    <property type="term" value="P:regulation of circadian rhythm"/>
    <property type="evidence" value="ECO:0007669"/>
    <property type="project" value="InterPro"/>
</dbReference>
<dbReference type="GO" id="GO:0006355">
    <property type="term" value="P:regulation of DNA-templated transcription"/>
    <property type="evidence" value="ECO:0007669"/>
    <property type="project" value="InterPro"/>
</dbReference>
<dbReference type="CDD" id="cd19485">
    <property type="entry name" value="KaiC-N"/>
    <property type="match status" value="1"/>
</dbReference>
<dbReference type="CDD" id="cd19484">
    <property type="entry name" value="KaiC_C"/>
    <property type="match status" value="1"/>
</dbReference>
<dbReference type="Gene3D" id="3.40.50.300">
    <property type="entry name" value="P-loop containing nucleotide triphosphate hydrolases"/>
    <property type="match status" value="2"/>
</dbReference>
<dbReference type="HAMAP" id="MF_01836">
    <property type="entry name" value="KaiC"/>
    <property type="match status" value="1"/>
</dbReference>
<dbReference type="InterPro" id="IPR051347">
    <property type="entry name" value="Circadian_clock_KaiC-rel"/>
</dbReference>
<dbReference type="InterPro" id="IPR013503">
    <property type="entry name" value="Circadian_KaiC_bact"/>
</dbReference>
<dbReference type="InterPro" id="IPR030665">
    <property type="entry name" value="KaiC"/>
</dbReference>
<dbReference type="InterPro" id="IPR014774">
    <property type="entry name" value="KaiC-like_dom"/>
</dbReference>
<dbReference type="InterPro" id="IPR047222">
    <property type="entry name" value="KaiC_C"/>
</dbReference>
<dbReference type="InterPro" id="IPR010624">
    <property type="entry name" value="KaiC_dom"/>
</dbReference>
<dbReference type="InterPro" id="IPR047221">
    <property type="entry name" value="KaiC_N"/>
</dbReference>
<dbReference type="InterPro" id="IPR027417">
    <property type="entry name" value="P-loop_NTPase"/>
</dbReference>
<dbReference type="NCBIfam" id="TIGR02655">
    <property type="entry name" value="circ_KaiC"/>
    <property type="match status" value="1"/>
</dbReference>
<dbReference type="NCBIfam" id="NF006799">
    <property type="entry name" value="PRK09302.1"/>
    <property type="match status" value="1"/>
</dbReference>
<dbReference type="PANTHER" id="PTHR42926">
    <property type="match status" value="1"/>
</dbReference>
<dbReference type="PANTHER" id="PTHR42926:SF1">
    <property type="entry name" value="CIRCADIAN CLOCK OSCILLATOR PROTEIN KAIC 1"/>
    <property type="match status" value="1"/>
</dbReference>
<dbReference type="Pfam" id="PF06745">
    <property type="entry name" value="ATPase"/>
    <property type="match status" value="2"/>
</dbReference>
<dbReference type="PIRSF" id="PIRSF039117">
    <property type="entry name" value="KaiC"/>
    <property type="match status" value="1"/>
</dbReference>
<dbReference type="SUPFAM" id="SSF52540">
    <property type="entry name" value="P-loop containing nucleoside triphosphate hydrolases"/>
    <property type="match status" value="2"/>
</dbReference>
<dbReference type="PROSITE" id="PS51146">
    <property type="entry name" value="KAIC"/>
    <property type="match status" value="2"/>
</dbReference>
<feature type="chain" id="PRO_0000217774" description="Circadian clock oscillator protein KaiC">
    <location>
        <begin position="1"/>
        <end position="522"/>
    </location>
</feature>
<feature type="domain" description="KaiC 1" evidence="1">
    <location>
        <begin position="1"/>
        <end position="248"/>
    </location>
</feature>
<feature type="domain" description="KaiC 2" evidence="1">
    <location>
        <begin position="262"/>
        <end position="522"/>
    </location>
</feature>
<feature type="binding site" evidence="1">
    <location>
        <position position="50"/>
    </location>
    <ligand>
        <name>ATP</name>
        <dbReference type="ChEBI" id="CHEBI:30616"/>
        <label>1</label>
        <note>ligand shared between homodimeric partners</note>
    </ligand>
</feature>
<feature type="binding site" evidence="1">
    <location>
        <position position="51"/>
    </location>
    <ligand>
        <name>ATP</name>
        <dbReference type="ChEBI" id="CHEBI:30616"/>
        <label>1</label>
        <note>ligand shared between homodimeric partners</note>
    </ligand>
</feature>
<feature type="binding site" evidence="1">
    <location>
        <position position="52"/>
    </location>
    <ligand>
        <name>ATP</name>
        <dbReference type="ChEBI" id="CHEBI:30616"/>
        <label>1</label>
        <note>ligand shared between homodimeric partners</note>
    </ligand>
</feature>
<feature type="binding site" evidence="1">
    <location>
        <position position="53"/>
    </location>
    <ligand>
        <name>ATP</name>
        <dbReference type="ChEBI" id="CHEBI:30616"/>
        <label>1</label>
        <note>ligand shared between homodimeric partners</note>
    </ligand>
</feature>
<feature type="binding site" evidence="1">
    <location>
        <position position="54"/>
    </location>
    <ligand>
        <name>ATP</name>
        <dbReference type="ChEBI" id="CHEBI:30616"/>
        <label>1</label>
        <note>ligand shared between homodimeric partners</note>
    </ligand>
</feature>
<feature type="binding site" evidence="1">
    <location>
        <position position="54"/>
    </location>
    <ligand>
        <name>Mg(2+)</name>
        <dbReference type="ChEBI" id="CHEBI:18420"/>
        <label>1</label>
    </ligand>
</feature>
<feature type="binding site" evidence="1">
    <location>
        <position position="90"/>
    </location>
    <ligand>
        <name>ATP</name>
        <dbReference type="ChEBI" id="CHEBI:30616"/>
        <label>1</label>
        <note>ligand shared between homodimeric partners</note>
    </ligand>
</feature>
<feature type="binding site" evidence="1">
    <location>
        <position position="225"/>
    </location>
    <ligand>
        <name>ATP</name>
        <dbReference type="ChEBI" id="CHEBI:30616"/>
        <label>1</label>
        <note>ligand shared between homodimeric partners</note>
    </ligand>
</feature>
<feature type="binding site" evidence="1">
    <location>
        <position position="226"/>
    </location>
    <ligand>
        <name>ATP</name>
        <dbReference type="ChEBI" id="CHEBI:30616"/>
        <label>1</label>
        <note>ligand shared between homodimeric partners</note>
    </ligand>
</feature>
<feature type="binding site" evidence="1">
    <location>
        <position position="227"/>
    </location>
    <ligand>
        <name>ATP</name>
        <dbReference type="ChEBI" id="CHEBI:30616"/>
        <label>1</label>
        <note>ligand shared between homodimeric partners</note>
    </ligand>
</feature>
<feature type="binding site" evidence="1">
    <location>
        <position position="229"/>
    </location>
    <ligand>
        <name>ATP</name>
        <dbReference type="ChEBI" id="CHEBI:30616"/>
        <label>1</label>
        <note>ligand shared between homodimeric partners</note>
    </ligand>
</feature>
<feature type="binding site" evidence="1">
    <location>
        <position position="231"/>
    </location>
    <ligand>
        <name>ATP</name>
        <dbReference type="ChEBI" id="CHEBI:30616"/>
        <label>1</label>
        <note>ligand shared between homodimeric partners</note>
    </ligand>
</feature>
<feature type="binding site" evidence="1">
    <location>
        <position position="241"/>
    </location>
    <ligand>
        <name>ATP</name>
        <dbReference type="ChEBI" id="CHEBI:30616"/>
        <label>1</label>
        <note>ligand shared between homodimeric partners</note>
    </ligand>
</feature>
<feature type="binding site" evidence="1">
    <location>
        <position position="242"/>
    </location>
    <ligand>
        <name>ATP</name>
        <dbReference type="ChEBI" id="CHEBI:30616"/>
        <label>1</label>
        <note>ligand shared between homodimeric partners</note>
    </ligand>
</feature>
<feature type="binding site" evidence="1">
    <location>
        <position position="291"/>
    </location>
    <ligand>
        <name>ATP</name>
        <dbReference type="ChEBI" id="CHEBI:30616"/>
        <label>2</label>
        <note>ligand shared between homodimeric partners</note>
    </ligand>
</feature>
<feature type="binding site" evidence="1">
    <location>
        <position position="292"/>
    </location>
    <ligand>
        <name>ATP</name>
        <dbReference type="ChEBI" id="CHEBI:30616"/>
        <label>2</label>
        <note>ligand shared between homodimeric partners</note>
    </ligand>
</feature>
<feature type="binding site" evidence="1">
    <location>
        <position position="293"/>
    </location>
    <ligand>
        <name>ATP</name>
        <dbReference type="ChEBI" id="CHEBI:30616"/>
        <label>2</label>
        <note>ligand shared between homodimeric partners</note>
    </ligand>
</feature>
<feature type="binding site" evidence="1">
    <location>
        <position position="294"/>
    </location>
    <ligand>
        <name>ATP</name>
        <dbReference type="ChEBI" id="CHEBI:30616"/>
        <label>2</label>
        <note>ligand shared between homodimeric partners</note>
    </ligand>
</feature>
<feature type="binding site" evidence="1">
    <location>
        <position position="295"/>
    </location>
    <ligand>
        <name>ATP</name>
        <dbReference type="ChEBI" id="CHEBI:30616"/>
        <label>2</label>
        <note>ligand shared between homodimeric partners</note>
    </ligand>
</feature>
<feature type="binding site" evidence="1">
    <location>
        <position position="296"/>
    </location>
    <ligand>
        <name>ATP</name>
        <dbReference type="ChEBI" id="CHEBI:30616"/>
        <label>2</label>
        <note>ligand shared between homodimeric partners</note>
    </ligand>
</feature>
<feature type="binding site" evidence="1">
    <location>
        <position position="296"/>
    </location>
    <ligand>
        <name>Mg(2+)</name>
        <dbReference type="ChEBI" id="CHEBI:18420"/>
        <label>2</label>
    </ligand>
</feature>
<feature type="binding site" evidence="1">
    <location>
        <position position="297"/>
    </location>
    <ligand>
        <name>ATP</name>
        <dbReference type="ChEBI" id="CHEBI:30616"/>
        <label>2</label>
        <note>ligand shared between homodimeric partners</note>
    </ligand>
</feature>
<feature type="binding site" evidence="1">
    <location>
        <position position="319"/>
    </location>
    <ligand>
        <name>Mg(2+)</name>
        <dbReference type="ChEBI" id="CHEBI:18420"/>
        <label>2</label>
    </ligand>
</feature>
<feature type="binding site" evidence="1">
    <location>
        <position position="332"/>
    </location>
    <ligand>
        <name>ATP</name>
        <dbReference type="ChEBI" id="CHEBI:30616"/>
        <label>2</label>
        <note>ligand shared between homodimeric partners</note>
    </ligand>
</feature>
<feature type="binding site" evidence="1">
    <location>
        <position position="452"/>
    </location>
    <ligand>
        <name>ATP</name>
        <dbReference type="ChEBI" id="CHEBI:30616"/>
        <label>2</label>
        <note>ligand shared between homodimeric partners</note>
    </ligand>
</feature>
<feature type="binding site" evidence="1">
    <location>
        <position position="458"/>
    </location>
    <ligand>
        <name>ATP</name>
        <dbReference type="ChEBI" id="CHEBI:30616"/>
        <label>2</label>
        <note>ligand shared between homodimeric partners</note>
    </ligand>
</feature>
<feature type="binding site" evidence="1">
    <location>
        <position position="459"/>
    </location>
    <ligand>
        <name>ATP</name>
        <dbReference type="ChEBI" id="CHEBI:30616"/>
        <label>2</label>
        <note>ligand shared between homodimeric partners</note>
    </ligand>
</feature>
<feature type="binding site" evidence="1">
    <location>
        <position position="460"/>
    </location>
    <ligand>
        <name>ATP</name>
        <dbReference type="ChEBI" id="CHEBI:30616"/>
        <label>2</label>
        <note>ligand shared between homodimeric partners</note>
    </ligand>
</feature>
<feature type="binding site" evidence="1">
    <location>
        <position position="462"/>
    </location>
    <ligand>
        <name>ATP</name>
        <dbReference type="ChEBI" id="CHEBI:30616"/>
        <label>2</label>
        <note>ligand shared between homodimeric partners</note>
    </ligand>
</feature>
<feature type="binding site" evidence="1">
    <location>
        <position position="464"/>
    </location>
    <ligand>
        <name>ATP</name>
        <dbReference type="ChEBI" id="CHEBI:30616"/>
        <label>2</label>
        <note>ligand shared between homodimeric partners</note>
    </ligand>
</feature>
<feature type="binding site" evidence="1">
    <location>
        <position position="466"/>
    </location>
    <ligand>
        <name>ATP</name>
        <dbReference type="ChEBI" id="CHEBI:30616"/>
        <label>2</label>
        <note>ligand shared between homodimeric partners</note>
    </ligand>
</feature>
<feature type="modified residue" description="Phosphoserine; by autocatalysis" evidence="1">
    <location>
        <position position="432"/>
    </location>
</feature>
<feature type="modified residue" description="Phosphothreonine; by autocatalysis" evidence="1">
    <location>
        <position position="433"/>
    </location>
</feature>
<feature type="sequence conflict" description="In Ref. 2; BAD21217." evidence="2" ref="2">
    <original>Q</original>
    <variation>P</variation>
    <location>
        <position position="96"/>
    </location>
</feature>
<feature type="sequence conflict" description="In Ref. 2; BAD21217." evidence="2" ref="2">
    <original>K</original>
    <variation>I</variation>
    <location>
        <position position="281"/>
    </location>
</feature>
<reference key="1">
    <citation type="journal article" date="2004" name="Nat. Struct. Mol. Biol.">
        <title>Crystal structure of the C-terminal clock-oscillator domain of the cyanobacterial KaiA protein.</title>
        <authorList>
            <person name="Uzumaki T."/>
            <person name="Fujita M."/>
            <person name="Nakatsu T."/>
            <person name="Hayashi F."/>
            <person name="Shibata H."/>
            <person name="Itoh N."/>
            <person name="Kato H."/>
            <person name="Ishiura M."/>
        </authorList>
    </citation>
    <scope>NUCLEOTIDE SEQUENCE [GENOMIC DNA]</scope>
</reference>
<reference key="2">
    <citation type="journal article" date="2008" name="Proc. Natl. Acad. Sci. U.S.A.">
        <title>Niche adaptation and genome expansion in the chlorophyll d-producing cyanobacterium Acaryochloris marina.</title>
        <authorList>
            <person name="Swingley W.D."/>
            <person name="Chen M."/>
            <person name="Cheung P.C."/>
            <person name="Conrad A.L."/>
            <person name="Dejesa L.C."/>
            <person name="Hao J."/>
            <person name="Honchak B.M."/>
            <person name="Karbach L.E."/>
            <person name="Kurdoglu A."/>
            <person name="Lahiri S."/>
            <person name="Mastrian S.D."/>
            <person name="Miyashita H."/>
            <person name="Page L."/>
            <person name="Ramakrishna P."/>
            <person name="Satoh S."/>
            <person name="Sattley W.M."/>
            <person name="Shimada Y."/>
            <person name="Taylor H.L."/>
            <person name="Tomo T."/>
            <person name="Tsuchiya T."/>
            <person name="Wang Z.T."/>
            <person name="Raymond J."/>
            <person name="Mimuro M."/>
            <person name="Blankenship R.E."/>
            <person name="Touchman J.W."/>
        </authorList>
    </citation>
    <scope>NUCLEOTIDE SEQUENCE [LARGE SCALE GENOMIC DNA]</scope>
    <source>
        <strain>MBIC 11017</strain>
    </source>
</reference>
<accession>Q6L8L1</accession>
<accession>B0C0R0</accession>
<protein>
    <recommendedName>
        <fullName evidence="1">Circadian clock oscillator protein KaiC</fullName>
        <ecNumber evidence="1">2.7.11.1</ecNumber>
        <ecNumber evidence="1">3.6.4.-</ecNumber>
    </recommendedName>
</protein>
<name>KAIC_ACAM1</name>
<organism>
    <name type="scientific">Acaryochloris marina (strain MBIC 11017)</name>
    <dbReference type="NCBI Taxonomy" id="329726"/>
    <lineage>
        <taxon>Bacteria</taxon>
        <taxon>Bacillati</taxon>
        <taxon>Cyanobacteriota</taxon>
        <taxon>Cyanophyceae</taxon>
        <taxon>Acaryochloridales</taxon>
        <taxon>Acaryochloridaceae</taxon>
        <taxon>Acaryochloris</taxon>
    </lineage>
</organism>
<keyword id="KW-0067">ATP-binding</keyword>
<keyword id="KW-0090">Biological rhythms</keyword>
<keyword id="KW-0378">Hydrolase</keyword>
<keyword id="KW-0418">Kinase</keyword>
<keyword id="KW-0460">Magnesium</keyword>
<keyword id="KW-0479">Metal-binding</keyword>
<keyword id="KW-0547">Nucleotide-binding</keyword>
<keyword id="KW-0597">Phosphoprotein</keyword>
<keyword id="KW-1185">Reference proteome</keyword>
<keyword id="KW-0677">Repeat</keyword>
<keyword id="KW-0723">Serine/threonine-protein kinase</keyword>
<keyword id="KW-0804">Transcription</keyword>
<keyword id="KW-0805">Transcription regulation</keyword>
<keyword id="KW-0808">Transferase</keyword>
<sequence length="522" mass="58285">MKKSNLSQYKKNDKNKVEVTKILTRIEGFDDISHGGIPLGRTTLVSGTSGTGKTMFAIQFLYHGIVHFDDPAVFVTFEESPKDIIQNALSFGWDLQQLMDDGKLFILDASPDPEGQDIAGEFDLSALIERIQYAISKYQAKRVGIDSVTAIFQQYDAATVVRREIFRLTARLKQIGVTTVMTTERVDEYGPVARYGVEEFVSDNVVIVRNVLEGERRRRTLEILKLRGTSHMKGEYPFTITDDGINIFPLGAMRLTQRSSNARVSSGVQTLDEMCGGGFFKDSIILVTGATGTGKTLLVSKFLEDACKNGDRAILFAYEESRAQLSRNAYSWGIDFEEMEQKGLLKILCTYPESAGLEDHLQQIKSEIAEFKPSRISIDSLSALARGVSNNAFRQFVIGVTGFAKQEEITGFFTNTTDHFLGSHSITESHISTITDTILMLQYVEILGEMSRAINVFKMRGSWHDKGIREYSISQHGPEIKNAFHNFEGIISGTPTRVSLDEKRDLSRIVQDVKGLSDDDLL</sequence>
<evidence type="ECO:0000255" key="1">
    <source>
        <dbReference type="HAMAP-Rule" id="MF_01836"/>
    </source>
</evidence>
<evidence type="ECO:0000305" key="2"/>
<proteinExistence type="inferred from homology"/>
<comment type="function">
    <text evidence="1">Central component of the KaiABC oscillator complex, which constitutes the main circadian regulator in cyanobacteria. Complex composition changes during the circadian cycle to control KaiC phosphorylation. KaiA stimulates KaiC autophosphorylation, while KaiB sequesters KaiA, leading to KaiC autodephosphorylation. Clock output pathways impact the RpaA transcriptional regulator. KaiC enhances the autophosphorylation activity of SasA, which then transfers its phosphate group to RpaA to activate it. KaiB and KaiC together enhance the phospho-RpaA dephosphatase activity of CikA.</text>
</comment>
<comment type="function">
    <text evidence="1">Has a weak, temperature-independent ATPase activity; ATPase activity defines the circadian period. The phosphorylation state of KaiC modulates its ATPase activity and effects KaiB binding.</text>
</comment>
<comment type="catalytic activity">
    <reaction evidence="1">
        <text>L-seryl-[protein] + ATP = O-phospho-L-seryl-[protein] + ADP + H(+)</text>
        <dbReference type="Rhea" id="RHEA:17989"/>
        <dbReference type="Rhea" id="RHEA-COMP:9863"/>
        <dbReference type="Rhea" id="RHEA-COMP:11604"/>
        <dbReference type="ChEBI" id="CHEBI:15378"/>
        <dbReference type="ChEBI" id="CHEBI:29999"/>
        <dbReference type="ChEBI" id="CHEBI:30616"/>
        <dbReference type="ChEBI" id="CHEBI:83421"/>
        <dbReference type="ChEBI" id="CHEBI:456216"/>
        <dbReference type="EC" id="2.7.11.1"/>
    </reaction>
</comment>
<comment type="catalytic activity">
    <reaction evidence="1">
        <text>L-threonyl-[protein] + ATP = O-phospho-L-threonyl-[protein] + ADP + H(+)</text>
        <dbReference type="Rhea" id="RHEA:46608"/>
        <dbReference type="Rhea" id="RHEA-COMP:11060"/>
        <dbReference type="Rhea" id="RHEA-COMP:11605"/>
        <dbReference type="ChEBI" id="CHEBI:15378"/>
        <dbReference type="ChEBI" id="CHEBI:30013"/>
        <dbReference type="ChEBI" id="CHEBI:30616"/>
        <dbReference type="ChEBI" id="CHEBI:61977"/>
        <dbReference type="ChEBI" id="CHEBI:456216"/>
        <dbReference type="EC" id="2.7.11.1"/>
    </reaction>
</comment>
<comment type="catalytic activity">
    <reaction evidence="1">
        <text>ATP + H2O = ADP + phosphate + H(+)</text>
        <dbReference type="Rhea" id="RHEA:13065"/>
        <dbReference type="ChEBI" id="CHEBI:15377"/>
        <dbReference type="ChEBI" id="CHEBI:15378"/>
        <dbReference type="ChEBI" id="CHEBI:30616"/>
        <dbReference type="ChEBI" id="CHEBI:43474"/>
        <dbReference type="ChEBI" id="CHEBI:456216"/>
    </reaction>
</comment>
<comment type="cofactor">
    <cofactor evidence="1">
        <name>Mg(2+)</name>
        <dbReference type="ChEBI" id="CHEBI:18420"/>
    </cofactor>
    <text evidence="1">Binds 2 Mg(2+) ions per subunit, one in each domain. Mg(2+) is required for hexamerization and phosphatase activity.</text>
</comment>
<comment type="activity regulation">
    <text evidence="1">The interaction with KaiA enhances its phosphorylation status, while the interaction with KaiB decreases it.</text>
</comment>
<comment type="subunit">
    <text evidence="1">Homohexamer; hexamerization is dependent on ATP-binding. The KaiABC complex composition changes during the circadian cycle to control KaiC phosphorylation. Complexes KaiC(6), KaiA(2-4):KaiC(6), KaiB(6):KaiC(6) and KaiC(6):KaiB(6):KaiA(12) are among the most important forms, many form cooperatively. KaiC interacts with SasA, activating its autokinase function and leading to RpaA activation.</text>
</comment>
<comment type="domain">
    <text evidence="1">In the homohexamer the 2 domains (called CI and CII) self-associate to each form a 'donut' layer; the compactness and local conformation of the domains varies over the cell cycle and impacts function. CII has the autokinase and autophosphatase activities, both CI and CII have (weak) ATPase activity; CI has the clock pacemaker role.</text>
</comment>
<comment type="PTM">
    <text evidence="1">Phosphorylated on serine and threonine residues by autocatalysis. Has a 4 step phosphorylation cycle; the autokinase acts first on Thr-433, then Ser-432. When Ser-432 is modified KaiC switches to an autophosphatase mode, acting first on phospho-Thr-433 then phospho-Ser-432.</text>
</comment>
<comment type="similarity">
    <text evidence="1">Belongs to the KaiC family.</text>
</comment>